<comment type="function">
    <text evidence="1">The coatomer is a cytosolic protein complex that binds to dilysine motifs and reversibly associates with Golgi non-clathrin-coated vesicles, which further mediate biosynthetic protein transport from the ER, via the Golgi up to the trans Golgi network. Coatomer complex is required for budding from Golgi membranes, and is essential for the retrograde Golgi-to-ER transport of dilysine-tagged proteins (By similarity).</text>
</comment>
<comment type="subunit">
    <text evidence="1">Oligomeric complex that consists of at least the alpha, beta, beta', gamma, delta, epsilon and zeta subunits.</text>
</comment>
<comment type="subcellular location">
    <subcellularLocation>
        <location evidence="1">Cytoplasm</location>
    </subcellularLocation>
    <subcellularLocation>
        <location evidence="1">Golgi apparatus membrane</location>
        <topology evidence="1">Peripheral membrane protein</topology>
        <orientation evidence="1">Cytoplasmic side</orientation>
    </subcellularLocation>
    <subcellularLocation>
        <location evidence="1">Cytoplasmic vesicle</location>
        <location evidence="1">COPI-coated vesicle membrane</location>
        <topology evidence="1">Peripheral membrane protein</topology>
        <orientation evidence="1">Cytoplasmic side</orientation>
    </subcellularLocation>
    <text evidence="1">The coatomer is cytoplasmic or polymerized on the cytoplasmic side of the Golgi, as well as on the vesicles/buds originating from it.</text>
</comment>
<comment type="sequence caution" evidence="2">
    <conflict type="erroneous gene model prediction">
        <sequence resource="EMBL-CDS" id="BAB17749"/>
    </conflict>
</comment>
<comment type="sequence caution" evidence="2">
    <conflict type="erroneous gene model prediction">
        <sequence resource="EMBL-CDS" id="BAF04673"/>
    </conflict>
</comment>
<feature type="chain" id="PRO_0000285619" description="Coatomer subunit beta-2">
    <location>
        <begin position="1"/>
        <end position="950"/>
    </location>
</feature>
<feature type="repeat" description="HEAT 1">
    <location>
        <begin position="92"/>
        <end position="126"/>
    </location>
</feature>
<feature type="repeat" description="HEAT 2">
    <location>
        <begin position="127"/>
        <end position="164"/>
    </location>
</feature>
<feature type="repeat" description="HEAT 3">
    <location>
        <begin position="275"/>
        <end position="312"/>
    </location>
</feature>
<feature type="repeat" description="HEAT 4">
    <location>
        <begin position="313"/>
        <end position="350"/>
    </location>
</feature>
<feature type="repeat" description="HEAT 5">
    <location>
        <begin position="392"/>
        <end position="429"/>
    </location>
</feature>
<dbReference type="EMBL" id="AP002862">
    <property type="protein sequence ID" value="BAB17749.1"/>
    <property type="status" value="ALT_SEQ"/>
    <property type="molecule type" value="Genomic_DNA"/>
</dbReference>
<dbReference type="EMBL" id="AP008207">
    <property type="protein sequence ID" value="BAF04673.2"/>
    <property type="status" value="ALT_SEQ"/>
    <property type="molecule type" value="Genomic_DNA"/>
</dbReference>
<dbReference type="EMBL" id="AP014957">
    <property type="protein sequence ID" value="BAS71602.1"/>
    <property type="molecule type" value="Genomic_DNA"/>
</dbReference>
<dbReference type="EMBL" id="CM000138">
    <property type="protein sequence ID" value="EAZ11457.1"/>
    <property type="molecule type" value="Genomic_DNA"/>
</dbReference>
<dbReference type="RefSeq" id="XP_015615004.1">
    <property type="nucleotide sequence ID" value="XM_015759518.1"/>
</dbReference>
<dbReference type="SMR" id="Q0JNK5"/>
<dbReference type="FunCoup" id="Q0JNK5">
    <property type="interactions" value="3720"/>
</dbReference>
<dbReference type="STRING" id="39947.Q0JNK5"/>
<dbReference type="PaxDb" id="39947-Q0JNK5"/>
<dbReference type="EnsemblPlants" id="Os01t0281400-00">
    <property type="protein sequence ID" value="Os01t0281400-00"/>
    <property type="gene ID" value="Os01g0281400"/>
</dbReference>
<dbReference type="Gramene" id="Os01t0281400-00">
    <property type="protein sequence ID" value="Os01t0281400-00"/>
    <property type="gene ID" value="Os01g0281400"/>
</dbReference>
<dbReference type="KEGG" id="dosa:Os01g0281400"/>
<dbReference type="eggNOG" id="KOG1058">
    <property type="taxonomic scope" value="Eukaryota"/>
</dbReference>
<dbReference type="HOGENOM" id="CLU_006949_0_0_1"/>
<dbReference type="InParanoid" id="Q0JNK5"/>
<dbReference type="OMA" id="CTCAQER"/>
<dbReference type="OrthoDB" id="10261439at2759"/>
<dbReference type="Proteomes" id="UP000000763">
    <property type="component" value="Chromosome 1"/>
</dbReference>
<dbReference type="Proteomes" id="UP000007752">
    <property type="component" value="Chromosome 1"/>
</dbReference>
<dbReference type="Proteomes" id="UP000059680">
    <property type="component" value="Chromosome 1"/>
</dbReference>
<dbReference type="GO" id="GO:0030126">
    <property type="term" value="C:COPI vesicle coat"/>
    <property type="evidence" value="ECO:0000318"/>
    <property type="project" value="GO_Central"/>
</dbReference>
<dbReference type="GO" id="GO:0000139">
    <property type="term" value="C:Golgi membrane"/>
    <property type="evidence" value="ECO:0007669"/>
    <property type="project" value="UniProtKB-SubCell"/>
</dbReference>
<dbReference type="GO" id="GO:0005198">
    <property type="term" value="F:structural molecule activity"/>
    <property type="evidence" value="ECO:0007669"/>
    <property type="project" value="InterPro"/>
</dbReference>
<dbReference type="GO" id="GO:0006888">
    <property type="term" value="P:endoplasmic reticulum to Golgi vesicle-mediated transport"/>
    <property type="evidence" value="ECO:0000318"/>
    <property type="project" value="GO_Central"/>
</dbReference>
<dbReference type="GO" id="GO:0006891">
    <property type="term" value="P:intra-Golgi vesicle-mediated transport"/>
    <property type="evidence" value="ECO:0000318"/>
    <property type="project" value="GO_Central"/>
</dbReference>
<dbReference type="GO" id="GO:0006886">
    <property type="term" value="P:intracellular protein transport"/>
    <property type="evidence" value="ECO:0007669"/>
    <property type="project" value="InterPro"/>
</dbReference>
<dbReference type="FunFam" id="1.25.10.10:FF:000166">
    <property type="entry name" value="Coatomer subunit beta"/>
    <property type="match status" value="1"/>
</dbReference>
<dbReference type="Gene3D" id="1.25.10.10">
    <property type="entry name" value="Leucine-rich Repeat Variant"/>
    <property type="match status" value="1"/>
</dbReference>
<dbReference type="InterPro" id="IPR011989">
    <property type="entry name" value="ARM-like"/>
</dbReference>
<dbReference type="InterPro" id="IPR016024">
    <property type="entry name" value="ARM-type_fold"/>
</dbReference>
<dbReference type="InterPro" id="IPR002553">
    <property type="entry name" value="Clathrin/coatomer_adapt-like_N"/>
</dbReference>
<dbReference type="InterPro" id="IPR011710">
    <property type="entry name" value="Coatomer_bsu_C"/>
</dbReference>
<dbReference type="InterPro" id="IPR016460">
    <property type="entry name" value="COPB1"/>
</dbReference>
<dbReference type="InterPro" id="IPR029446">
    <property type="entry name" value="COPB1_appendage_platform_dom"/>
</dbReference>
<dbReference type="PANTHER" id="PTHR10635">
    <property type="entry name" value="COATOMER SUBUNIT BETA"/>
    <property type="match status" value="1"/>
</dbReference>
<dbReference type="PANTHER" id="PTHR10635:SF0">
    <property type="entry name" value="COATOMER SUBUNIT BETA"/>
    <property type="match status" value="1"/>
</dbReference>
<dbReference type="Pfam" id="PF01602">
    <property type="entry name" value="Adaptin_N"/>
    <property type="match status" value="1"/>
</dbReference>
<dbReference type="Pfam" id="PF07718">
    <property type="entry name" value="Coatamer_beta_C"/>
    <property type="match status" value="1"/>
</dbReference>
<dbReference type="Pfam" id="PF14806">
    <property type="entry name" value="Coatomer_b_Cpla"/>
    <property type="match status" value="1"/>
</dbReference>
<dbReference type="PIRSF" id="PIRSF005727">
    <property type="entry name" value="Coatomer_beta_subunit"/>
    <property type="match status" value="1"/>
</dbReference>
<dbReference type="SUPFAM" id="SSF48371">
    <property type="entry name" value="ARM repeat"/>
    <property type="match status" value="1"/>
</dbReference>
<proteinExistence type="inferred from homology"/>
<protein>
    <recommendedName>
        <fullName>Coatomer subunit beta-2</fullName>
    </recommendedName>
    <alternativeName>
        <fullName>Beta-coat protein 2</fullName>
        <shortName>Beta-COP 2</shortName>
    </alternativeName>
</protein>
<organism>
    <name type="scientific">Oryza sativa subsp. japonica</name>
    <name type="common">Rice</name>
    <dbReference type="NCBI Taxonomy" id="39947"/>
    <lineage>
        <taxon>Eukaryota</taxon>
        <taxon>Viridiplantae</taxon>
        <taxon>Streptophyta</taxon>
        <taxon>Embryophyta</taxon>
        <taxon>Tracheophyta</taxon>
        <taxon>Spermatophyta</taxon>
        <taxon>Magnoliopsida</taxon>
        <taxon>Liliopsida</taxon>
        <taxon>Poales</taxon>
        <taxon>Poaceae</taxon>
        <taxon>BOP clade</taxon>
        <taxon>Oryzoideae</taxon>
        <taxon>Oryzeae</taxon>
        <taxon>Oryzinae</taxon>
        <taxon>Oryza</taxon>
        <taxon>Oryza sativa</taxon>
    </lineage>
</organism>
<accession>Q0JNK5</accession>
<accession>A0A0P0V121</accession>
<accession>Q9FTP5</accession>
<keyword id="KW-0963">Cytoplasm</keyword>
<keyword id="KW-0968">Cytoplasmic vesicle</keyword>
<keyword id="KW-0931">ER-Golgi transport</keyword>
<keyword id="KW-0333">Golgi apparatus</keyword>
<keyword id="KW-0472">Membrane</keyword>
<keyword id="KW-0653">Protein transport</keyword>
<keyword id="KW-1185">Reference proteome</keyword>
<keyword id="KW-0677">Repeat</keyword>
<keyword id="KW-0813">Transport</keyword>
<reference key="1">
    <citation type="journal article" date="2002" name="Nature">
        <title>The genome sequence and structure of rice chromosome 1.</title>
        <authorList>
            <person name="Sasaki T."/>
            <person name="Matsumoto T."/>
            <person name="Yamamoto K."/>
            <person name="Sakata K."/>
            <person name="Baba T."/>
            <person name="Katayose Y."/>
            <person name="Wu J."/>
            <person name="Niimura Y."/>
            <person name="Cheng Z."/>
            <person name="Nagamura Y."/>
            <person name="Antonio B.A."/>
            <person name="Kanamori H."/>
            <person name="Hosokawa S."/>
            <person name="Masukawa M."/>
            <person name="Arikawa K."/>
            <person name="Chiden Y."/>
            <person name="Hayashi M."/>
            <person name="Okamoto M."/>
            <person name="Ando T."/>
            <person name="Aoki H."/>
            <person name="Arita K."/>
            <person name="Hamada M."/>
            <person name="Harada C."/>
            <person name="Hijishita S."/>
            <person name="Honda M."/>
            <person name="Ichikawa Y."/>
            <person name="Idonuma A."/>
            <person name="Iijima M."/>
            <person name="Ikeda M."/>
            <person name="Ikeno M."/>
            <person name="Ito S."/>
            <person name="Ito T."/>
            <person name="Ito Y."/>
            <person name="Ito Y."/>
            <person name="Iwabuchi A."/>
            <person name="Kamiya K."/>
            <person name="Karasawa W."/>
            <person name="Katagiri S."/>
            <person name="Kikuta A."/>
            <person name="Kobayashi N."/>
            <person name="Kono I."/>
            <person name="Machita K."/>
            <person name="Maehara T."/>
            <person name="Mizuno H."/>
            <person name="Mizubayashi T."/>
            <person name="Mukai Y."/>
            <person name="Nagasaki H."/>
            <person name="Nakashima M."/>
            <person name="Nakama Y."/>
            <person name="Nakamichi Y."/>
            <person name="Nakamura M."/>
            <person name="Namiki N."/>
            <person name="Negishi M."/>
            <person name="Ohta I."/>
            <person name="Ono N."/>
            <person name="Saji S."/>
            <person name="Sakai K."/>
            <person name="Shibata M."/>
            <person name="Shimokawa T."/>
            <person name="Shomura A."/>
            <person name="Song J."/>
            <person name="Takazaki Y."/>
            <person name="Terasawa K."/>
            <person name="Tsuji K."/>
            <person name="Waki K."/>
            <person name="Yamagata H."/>
            <person name="Yamane H."/>
            <person name="Yoshiki S."/>
            <person name="Yoshihara R."/>
            <person name="Yukawa K."/>
            <person name="Zhong H."/>
            <person name="Iwama H."/>
            <person name="Endo T."/>
            <person name="Ito H."/>
            <person name="Hahn J.H."/>
            <person name="Kim H.-I."/>
            <person name="Eun M.-Y."/>
            <person name="Yano M."/>
            <person name="Jiang J."/>
            <person name="Gojobori T."/>
        </authorList>
    </citation>
    <scope>NUCLEOTIDE SEQUENCE [LARGE SCALE GENOMIC DNA]</scope>
    <source>
        <strain>cv. Nipponbare</strain>
    </source>
</reference>
<reference key="2">
    <citation type="journal article" date="2005" name="Nature">
        <title>The map-based sequence of the rice genome.</title>
        <authorList>
            <consortium name="International rice genome sequencing project (IRGSP)"/>
        </authorList>
    </citation>
    <scope>NUCLEOTIDE SEQUENCE [LARGE SCALE GENOMIC DNA]</scope>
    <source>
        <strain>cv. Nipponbare</strain>
    </source>
</reference>
<reference key="3">
    <citation type="journal article" date="2008" name="Nucleic Acids Res.">
        <title>The rice annotation project database (RAP-DB): 2008 update.</title>
        <authorList>
            <consortium name="The rice annotation project (RAP)"/>
        </authorList>
    </citation>
    <scope>GENOME REANNOTATION</scope>
    <source>
        <strain>cv. Nipponbare</strain>
    </source>
</reference>
<reference key="4">
    <citation type="journal article" date="2013" name="Rice">
        <title>Improvement of the Oryza sativa Nipponbare reference genome using next generation sequence and optical map data.</title>
        <authorList>
            <person name="Kawahara Y."/>
            <person name="de la Bastide M."/>
            <person name="Hamilton J.P."/>
            <person name="Kanamori H."/>
            <person name="McCombie W.R."/>
            <person name="Ouyang S."/>
            <person name="Schwartz D.C."/>
            <person name="Tanaka T."/>
            <person name="Wu J."/>
            <person name="Zhou S."/>
            <person name="Childs K.L."/>
            <person name="Davidson R.M."/>
            <person name="Lin H."/>
            <person name="Quesada-Ocampo L."/>
            <person name="Vaillancourt B."/>
            <person name="Sakai H."/>
            <person name="Lee S.S."/>
            <person name="Kim J."/>
            <person name="Numa H."/>
            <person name="Itoh T."/>
            <person name="Buell C.R."/>
            <person name="Matsumoto T."/>
        </authorList>
    </citation>
    <scope>GENOME REANNOTATION</scope>
    <source>
        <strain>cv. Nipponbare</strain>
    </source>
</reference>
<reference key="5">
    <citation type="journal article" date="2005" name="PLoS Biol.">
        <title>The genomes of Oryza sativa: a history of duplications.</title>
        <authorList>
            <person name="Yu J."/>
            <person name="Wang J."/>
            <person name="Lin W."/>
            <person name="Li S."/>
            <person name="Li H."/>
            <person name="Zhou J."/>
            <person name="Ni P."/>
            <person name="Dong W."/>
            <person name="Hu S."/>
            <person name="Zeng C."/>
            <person name="Zhang J."/>
            <person name="Zhang Y."/>
            <person name="Li R."/>
            <person name="Xu Z."/>
            <person name="Li S."/>
            <person name="Li X."/>
            <person name="Zheng H."/>
            <person name="Cong L."/>
            <person name="Lin L."/>
            <person name="Yin J."/>
            <person name="Geng J."/>
            <person name="Li G."/>
            <person name="Shi J."/>
            <person name="Liu J."/>
            <person name="Lv H."/>
            <person name="Li J."/>
            <person name="Wang J."/>
            <person name="Deng Y."/>
            <person name="Ran L."/>
            <person name="Shi X."/>
            <person name="Wang X."/>
            <person name="Wu Q."/>
            <person name="Li C."/>
            <person name="Ren X."/>
            <person name="Wang J."/>
            <person name="Wang X."/>
            <person name="Li D."/>
            <person name="Liu D."/>
            <person name="Zhang X."/>
            <person name="Ji Z."/>
            <person name="Zhao W."/>
            <person name="Sun Y."/>
            <person name="Zhang Z."/>
            <person name="Bao J."/>
            <person name="Han Y."/>
            <person name="Dong L."/>
            <person name="Ji J."/>
            <person name="Chen P."/>
            <person name="Wu S."/>
            <person name="Liu J."/>
            <person name="Xiao Y."/>
            <person name="Bu D."/>
            <person name="Tan J."/>
            <person name="Yang L."/>
            <person name="Ye C."/>
            <person name="Zhang J."/>
            <person name="Xu J."/>
            <person name="Zhou Y."/>
            <person name="Yu Y."/>
            <person name="Zhang B."/>
            <person name="Zhuang S."/>
            <person name="Wei H."/>
            <person name="Liu B."/>
            <person name="Lei M."/>
            <person name="Yu H."/>
            <person name="Li Y."/>
            <person name="Xu H."/>
            <person name="Wei S."/>
            <person name="He X."/>
            <person name="Fang L."/>
            <person name="Zhang Z."/>
            <person name="Zhang Y."/>
            <person name="Huang X."/>
            <person name="Su Z."/>
            <person name="Tong W."/>
            <person name="Li J."/>
            <person name="Tong Z."/>
            <person name="Li S."/>
            <person name="Ye J."/>
            <person name="Wang L."/>
            <person name="Fang L."/>
            <person name="Lei T."/>
            <person name="Chen C.-S."/>
            <person name="Chen H.-C."/>
            <person name="Xu Z."/>
            <person name="Li H."/>
            <person name="Huang H."/>
            <person name="Zhang F."/>
            <person name="Xu H."/>
            <person name="Li N."/>
            <person name="Zhao C."/>
            <person name="Li S."/>
            <person name="Dong L."/>
            <person name="Huang Y."/>
            <person name="Li L."/>
            <person name="Xi Y."/>
            <person name="Qi Q."/>
            <person name="Li W."/>
            <person name="Zhang B."/>
            <person name="Hu W."/>
            <person name="Zhang Y."/>
            <person name="Tian X."/>
            <person name="Jiao Y."/>
            <person name="Liang X."/>
            <person name="Jin J."/>
            <person name="Gao L."/>
            <person name="Zheng W."/>
            <person name="Hao B."/>
            <person name="Liu S.-M."/>
            <person name="Wang W."/>
            <person name="Yuan L."/>
            <person name="Cao M."/>
            <person name="McDermott J."/>
            <person name="Samudrala R."/>
            <person name="Wang J."/>
            <person name="Wong G.K.-S."/>
            <person name="Yang H."/>
        </authorList>
    </citation>
    <scope>NUCLEOTIDE SEQUENCE [LARGE SCALE GENOMIC DNA]</scope>
    <source>
        <strain>cv. Nipponbare</strain>
    </source>
</reference>
<sequence>MEKPSTLLVHFDKGSAAMAGEIKADLEGSDVAAKVDAMKRAVMLLLNGETLPTLFITVVRYVLPSEDHTIQKLLLLYLEIIDKRDAAGRGLPEMILICQNLRNNLHHPNEYIRGVTLRFLCRLSEPEVLEPLVPSILENLDHRHHFIRRHALSAISSIYRLPHGDQLVPDAPELVERALASEQDASARRNAFLMLCTCAQERAVAYLLSNADRVAEWPDLLQMAAVDLIRKVCRSPNRADKGRYIKIIIALLSSPSTAVVYECAGALVSLSSAPTAVRAAANTYCELLSSQSDNNVKLIVLDRLNELRTSHRDVMVDVVMDVLRALASPNLDVKRKVLDLVLDLLTARNVEEVVLYLKKEVVKTQAGELEKSGEYRQMLVQAIHACAVEYPEVAGSVVHLLMDFLGDTNVAAAVDVVLFVREIIETNPKLRVSMIQRLIDTFYQIRASRVCSCALWILGEYSLSLSEVENAISTIKQCLGDVPFYTVSEEGEATDSAKPAQPVVNSVTVSSRRPVVLADGTYATQSAATEAISTPSVAPGSLSSTLNLRSLILSGDFFLAAVISCTLTKLVLRLEEVQPSMVEVNKACTGALLVMTSILQLGQSSYLPHPIDNDSYDRIVLCVRLLCNTGDDVRKVWLQSCRQSFAKMLAEKQFRETEEMKAKAQISHAQPDDLIDFYHLKSRRGMSQLELEDEVQDDLKAATGGFTKDAYDANRLNRILQLTGFSDPVYAEAYVTVHHYDIVLDVTIINRTKETLQNLCLELATMGDLKLVDRPQNYTLAPESSKQIRANIKVSSTETGVIFGNIVYETSNVMERSVVVLNDIHIDIMDYISPATCADVTFRNMWAEFEWENKVAVNTVIQNEKEFLDHIIKSTNMKCLTPPSALDGECGFLAANLYAKSVFGEDALVNISIEKQFDGKLSGYIRIRSKTQGIALSLGDKITLKQKGGS</sequence>
<gene>
    <name type="ordered locus">Os01g0281400</name>
    <name type="ordered locus">LOC_Os01g17430</name>
    <name type="ORF">OsJ_001282</name>
    <name type="ORF">OSJNBa0036E02.23</name>
</gene>
<name>COPB2_ORYSJ</name>
<evidence type="ECO:0000250" key="1"/>
<evidence type="ECO:0000305" key="2"/>